<protein>
    <recommendedName>
        <fullName evidence="1">5-methyltetrahydropteroyltriglutamate--homocysteine methyltransferase</fullName>
        <ecNumber evidence="1">2.1.1.14</ecNumber>
    </recommendedName>
    <alternativeName>
        <fullName evidence="1">Cobalamin-independent methionine synthase</fullName>
    </alternativeName>
    <alternativeName>
        <fullName evidence="1">Methionine synthase, vitamin-B12 independent isozyme</fullName>
    </alternativeName>
</protein>
<accession>A6TGK9</accession>
<evidence type="ECO:0000255" key="1">
    <source>
        <dbReference type="HAMAP-Rule" id="MF_00172"/>
    </source>
</evidence>
<comment type="function">
    <text evidence="1">Catalyzes the transfer of a methyl group from 5-methyltetrahydrofolate to homocysteine resulting in methionine formation.</text>
</comment>
<comment type="catalytic activity">
    <reaction evidence="1">
        <text>5-methyltetrahydropteroyltri-L-glutamate + L-homocysteine = tetrahydropteroyltri-L-glutamate + L-methionine</text>
        <dbReference type="Rhea" id="RHEA:21196"/>
        <dbReference type="ChEBI" id="CHEBI:57844"/>
        <dbReference type="ChEBI" id="CHEBI:58140"/>
        <dbReference type="ChEBI" id="CHEBI:58199"/>
        <dbReference type="ChEBI" id="CHEBI:58207"/>
        <dbReference type="EC" id="2.1.1.14"/>
    </reaction>
</comment>
<comment type="cofactor">
    <cofactor evidence="1">
        <name>Zn(2+)</name>
        <dbReference type="ChEBI" id="CHEBI:29105"/>
    </cofactor>
    <text evidence="1">Binds 1 zinc ion per subunit.</text>
</comment>
<comment type="pathway">
    <text evidence="1">Amino-acid biosynthesis; L-methionine biosynthesis via de novo pathway; L-methionine from L-homocysteine (MetE route): step 1/1.</text>
</comment>
<comment type="similarity">
    <text evidence="1">Belongs to the vitamin-B12 independent methionine synthase family.</text>
</comment>
<feature type="chain" id="PRO_1000017249" description="5-methyltetrahydropteroyltriglutamate--homocysteine methyltransferase">
    <location>
        <begin position="1"/>
        <end position="754"/>
    </location>
</feature>
<feature type="active site" description="Proton donor" evidence="1">
    <location>
        <position position="694"/>
    </location>
</feature>
<feature type="binding site" evidence="1">
    <location>
        <begin position="17"/>
        <end position="20"/>
    </location>
    <ligand>
        <name>5-methyltetrahydropteroyltri-L-glutamate</name>
        <dbReference type="ChEBI" id="CHEBI:58207"/>
    </ligand>
</feature>
<feature type="binding site" evidence="1">
    <location>
        <position position="117"/>
    </location>
    <ligand>
        <name>5-methyltetrahydropteroyltri-L-glutamate</name>
        <dbReference type="ChEBI" id="CHEBI:58207"/>
    </ligand>
</feature>
<feature type="binding site" evidence="1">
    <location>
        <begin position="431"/>
        <end position="433"/>
    </location>
    <ligand>
        <name>L-homocysteine</name>
        <dbReference type="ChEBI" id="CHEBI:58199"/>
    </ligand>
</feature>
<feature type="binding site" evidence="1">
    <location>
        <begin position="431"/>
        <end position="433"/>
    </location>
    <ligand>
        <name>L-methionine</name>
        <dbReference type="ChEBI" id="CHEBI:57844"/>
    </ligand>
</feature>
<feature type="binding site" evidence="1">
    <location>
        <position position="484"/>
    </location>
    <ligand>
        <name>L-homocysteine</name>
        <dbReference type="ChEBI" id="CHEBI:58199"/>
    </ligand>
</feature>
<feature type="binding site" evidence="1">
    <location>
        <position position="484"/>
    </location>
    <ligand>
        <name>L-methionine</name>
        <dbReference type="ChEBI" id="CHEBI:57844"/>
    </ligand>
</feature>
<feature type="binding site" evidence="1">
    <location>
        <begin position="515"/>
        <end position="516"/>
    </location>
    <ligand>
        <name>5-methyltetrahydropteroyltri-L-glutamate</name>
        <dbReference type="ChEBI" id="CHEBI:58207"/>
    </ligand>
</feature>
<feature type="binding site" evidence="1">
    <location>
        <position position="561"/>
    </location>
    <ligand>
        <name>5-methyltetrahydropteroyltri-L-glutamate</name>
        <dbReference type="ChEBI" id="CHEBI:58207"/>
    </ligand>
</feature>
<feature type="binding site" evidence="1">
    <location>
        <position position="599"/>
    </location>
    <ligand>
        <name>L-homocysteine</name>
        <dbReference type="ChEBI" id="CHEBI:58199"/>
    </ligand>
</feature>
<feature type="binding site" evidence="1">
    <location>
        <position position="599"/>
    </location>
    <ligand>
        <name>L-methionine</name>
        <dbReference type="ChEBI" id="CHEBI:57844"/>
    </ligand>
</feature>
<feature type="binding site" evidence="1">
    <location>
        <position position="605"/>
    </location>
    <ligand>
        <name>5-methyltetrahydropteroyltri-L-glutamate</name>
        <dbReference type="ChEBI" id="CHEBI:58207"/>
    </ligand>
</feature>
<feature type="binding site" evidence="1">
    <location>
        <position position="641"/>
    </location>
    <ligand>
        <name>Zn(2+)</name>
        <dbReference type="ChEBI" id="CHEBI:29105"/>
        <note>catalytic</note>
    </ligand>
</feature>
<feature type="binding site" evidence="1">
    <location>
        <position position="643"/>
    </location>
    <ligand>
        <name>Zn(2+)</name>
        <dbReference type="ChEBI" id="CHEBI:29105"/>
        <note>catalytic</note>
    </ligand>
</feature>
<feature type="binding site" evidence="1">
    <location>
        <position position="665"/>
    </location>
    <ligand>
        <name>Zn(2+)</name>
        <dbReference type="ChEBI" id="CHEBI:29105"/>
        <note>catalytic</note>
    </ligand>
</feature>
<feature type="binding site" evidence="1">
    <location>
        <position position="726"/>
    </location>
    <ligand>
        <name>Zn(2+)</name>
        <dbReference type="ChEBI" id="CHEBI:29105"/>
        <note>catalytic</note>
    </ligand>
</feature>
<organism>
    <name type="scientific">Klebsiella pneumoniae subsp. pneumoniae (strain ATCC 700721 / MGH 78578)</name>
    <dbReference type="NCBI Taxonomy" id="272620"/>
    <lineage>
        <taxon>Bacteria</taxon>
        <taxon>Pseudomonadati</taxon>
        <taxon>Pseudomonadota</taxon>
        <taxon>Gammaproteobacteria</taxon>
        <taxon>Enterobacterales</taxon>
        <taxon>Enterobacteriaceae</taxon>
        <taxon>Klebsiella/Raoultella group</taxon>
        <taxon>Klebsiella</taxon>
        <taxon>Klebsiella pneumoniae complex</taxon>
    </lineage>
</organism>
<keyword id="KW-0028">Amino-acid biosynthesis</keyword>
<keyword id="KW-0479">Metal-binding</keyword>
<keyword id="KW-0486">Methionine biosynthesis</keyword>
<keyword id="KW-0489">Methyltransferase</keyword>
<keyword id="KW-0677">Repeat</keyword>
<keyword id="KW-0808">Transferase</keyword>
<keyword id="KW-0862">Zinc</keyword>
<dbReference type="EC" id="2.1.1.14" evidence="1"/>
<dbReference type="EMBL" id="CP000647">
    <property type="protein sequence ID" value="ABR79693.1"/>
    <property type="molecule type" value="Genomic_DNA"/>
</dbReference>
<dbReference type="RefSeq" id="WP_015959230.1">
    <property type="nucleotide sequence ID" value="NC_009648.1"/>
</dbReference>
<dbReference type="SMR" id="A6TGK9"/>
<dbReference type="STRING" id="272620.KPN_04325"/>
<dbReference type="jPOST" id="A6TGK9"/>
<dbReference type="PaxDb" id="272620-KPN_04325"/>
<dbReference type="EnsemblBacteria" id="ABR79693">
    <property type="protein sequence ID" value="ABR79693"/>
    <property type="gene ID" value="KPN_04325"/>
</dbReference>
<dbReference type="KEGG" id="kpn:KPN_04325"/>
<dbReference type="HOGENOM" id="CLU_013175_0_0_6"/>
<dbReference type="UniPathway" id="UPA00051">
    <property type="reaction ID" value="UER00082"/>
</dbReference>
<dbReference type="Proteomes" id="UP000000265">
    <property type="component" value="Chromosome"/>
</dbReference>
<dbReference type="GO" id="GO:0003871">
    <property type="term" value="F:5-methyltetrahydropteroyltriglutamate-homocysteine S-methyltransferase activity"/>
    <property type="evidence" value="ECO:0007669"/>
    <property type="project" value="UniProtKB-UniRule"/>
</dbReference>
<dbReference type="GO" id="GO:0008270">
    <property type="term" value="F:zinc ion binding"/>
    <property type="evidence" value="ECO:0007669"/>
    <property type="project" value="InterPro"/>
</dbReference>
<dbReference type="GO" id="GO:0009086">
    <property type="term" value="P:methionine biosynthetic process"/>
    <property type="evidence" value="ECO:0007669"/>
    <property type="project" value="UniProtKB-UniRule"/>
</dbReference>
<dbReference type="GO" id="GO:0032259">
    <property type="term" value="P:methylation"/>
    <property type="evidence" value="ECO:0007669"/>
    <property type="project" value="UniProtKB-KW"/>
</dbReference>
<dbReference type="CDD" id="cd03311">
    <property type="entry name" value="CIMS_C_terminal_like"/>
    <property type="match status" value="1"/>
</dbReference>
<dbReference type="CDD" id="cd03312">
    <property type="entry name" value="CIMS_N_terminal_like"/>
    <property type="match status" value="1"/>
</dbReference>
<dbReference type="FunFam" id="3.20.20.210:FF:000002">
    <property type="entry name" value="5-methyltetrahydropteroyltriglutamate--homocysteine methyltransferase"/>
    <property type="match status" value="1"/>
</dbReference>
<dbReference type="FunFam" id="3.20.20.210:FF:000003">
    <property type="entry name" value="5-methyltetrahydropteroyltriglutamate--homocysteine methyltransferase"/>
    <property type="match status" value="1"/>
</dbReference>
<dbReference type="Gene3D" id="3.20.20.210">
    <property type="match status" value="2"/>
</dbReference>
<dbReference type="HAMAP" id="MF_00172">
    <property type="entry name" value="Meth_synth"/>
    <property type="match status" value="1"/>
</dbReference>
<dbReference type="InterPro" id="IPR013215">
    <property type="entry name" value="Cbl-indep_Met_Synth_N"/>
</dbReference>
<dbReference type="InterPro" id="IPR006276">
    <property type="entry name" value="Cobalamin-indep_Met_synthase"/>
</dbReference>
<dbReference type="InterPro" id="IPR002629">
    <property type="entry name" value="Met_Synth_C/arc"/>
</dbReference>
<dbReference type="InterPro" id="IPR038071">
    <property type="entry name" value="UROD/MetE-like_sf"/>
</dbReference>
<dbReference type="NCBIfam" id="TIGR01371">
    <property type="entry name" value="met_syn_B12ind"/>
    <property type="match status" value="1"/>
</dbReference>
<dbReference type="NCBIfam" id="NF003556">
    <property type="entry name" value="PRK05222.1"/>
    <property type="match status" value="1"/>
</dbReference>
<dbReference type="PANTHER" id="PTHR30519">
    <property type="entry name" value="5-METHYLTETRAHYDROPTEROYLTRIGLUTAMATE--HOMOCYSTEINE METHYLTRANSFERASE"/>
    <property type="match status" value="1"/>
</dbReference>
<dbReference type="Pfam" id="PF08267">
    <property type="entry name" value="Meth_synt_1"/>
    <property type="match status" value="1"/>
</dbReference>
<dbReference type="Pfam" id="PF01717">
    <property type="entry name" value="Meth_synt_2"/>
    <property type="match status" value="1"/>
</dbReference>
<dbReference type="PIRSF" id="PIRSF000382">
    <property type="entry name" value="MeTrfase_B12_ind"/>
    <property type="match status" value="1"/>
</dbReference>
<dbReference type="SUPFAM" id="SSF51726">
    <property type="entry name" value="UROD/MetE-like"/>
    <property type="match status" value="2"/>
</dbReference>
<sequence>MTIINHTLGFPRVGLRRELKKAQESYWAGNATREELLAVGRELRARHWEQQKQAGVDLLPVGDFAWYDHVLTTSLLLGNVPARHQNKDGSIDIDTLFRIGRGRAPTGEPAAAAEMTKWFNTNYHYMVPEFVKGQQFKLSWTQLLDEVDEALALGHKIKPVLLGPVTYLWLGKVKGEPFDRLTLLNTILPVYQQVLAELAKRGIDWVQIDEPALVLELPPAWLEAFQPAYDALQGQVKLLLTTYFEGVSDNLATIAALPVQGLHVDLVHGKDDVAELHNRLPADWLLSAGLINGRNVWRADLTEKYAQIKDLVGKRELWVASSCSLLHSPIDLSVETRLDAEVKSWFAFALQKCGELALLRDALNSGDTAAITEWSAPIQARRHSTRVHNAEVEKRLAAITAQDSQRASPYEVRAQAQRQRFNLPKWPTTTIGSFPQTTEIRGLRLDFKKGNLDASHYRTGIAEHIKQAIVEQERLGLDVLVHGEAERNDMVEYFGEHLDGFIFTQNGWVQSYGSRCVKPPVVIGDVSRPQAITVDWAKYAQSLTAKPVKGMLTGPVTILCWSFPREDVSRETIAKQIALALRDEVADLEAAGIGIIQIDEPALREGLPLKRSDWDAYLQWGVEAFRLNAAVAKDDTQIHTHMCYCEFNDIMDSIAALDADVITIETSRSDMELLESFEAFEYPNEIGPGVYDIHSPNVPSVEWIEALLKKAAQRIPVERLWVNPDCGLKTRGWPETRAALANMVQAARNLRQSA</sequence>
<gene>
    <name evidence="1" type="primary">metE</name>
    <name type="ordered locus">KPN78578_42690</name>
    <name type="ORF">KPN_04325</name>
</gene>
<proteinExistence type="inferred from homology"/>
<reference key="1">
    <citation type="submission" date="2006-09" db="EMBL/GenBank/DDBJ databases">
        <authorList>
            <consortium name="The Klebsiella pneumonia Genome Sequencing Project"/>
            <person name="McClelland M."/>
            <person name="Sanderson E.K."/>
            <person name="Spieth J."/>
            <person name="Clifton W.S."/>
            <person name="Latreille P."/>
            <person name="Sabo A."/>
            <person name="Pepin K."/>
            <person name="Bhonagiri V."/>
            <person name="Porwollik S."/>
            <person name="Ali J."/>
            <person name="Wilson R.K."/>
        </authorList>
    </citation>
    <scope>NUCLEOTIDE SEQUENCE [LARGE SCALE GENOMIC DNA]</scope>
    <source>
        <strain>ATCC 700721 / MGH 78578</strain>
    </source>
</reference>
<name>METE_KLEP7</name>